<name>TAL_DESAL</name>
<protein>
    <recommendedName>
        <fullName evidence="1">Probable transaldolase</fullName>
        <ecNumber evidence="1">2.2.1.2</ecNumber>
    </recommendedName>
</protein>
<accession>B8FH38</accession>
<feature type="chain" id="PRO_1000126306" description="Probable transaldolase">
    <location>
        <begin position="1"/>
        <end position="214"/>
    </location>
</feature>
<feature type="active site" description="Schiff-base intermediate with substrate" evidence="1">
    <location>
        <position position="83"/>
    </location>
</feature>
<gene>
    <name evidence="1" type="primary">tal</name>
    <name type="ordered locus">Dalk_0417</name>
</gene>
<organism>
    <name type="scientific">Desulfatibacillum aliphaticivorans</name>
    <dbReference type="NCBI Taxonomy" id="218208"/>
    <lineage>
        <taxon>Bacteria</taxon>
        <taxon>Pseudomonadati</taxon>
        <taxon>Thermodesulfobacteriota</taxon>
        <taxon>Desulfobacteria</taxon>
        <taxon>Desulfobacterales</taxon>
        <taxon>Desulfatibacillaceae</taxon>
        <taxon>Desulfatibacillum</taxon>
    </lineage>
</organism>
<reference key="1">
    <citation type="journal article" date="2012" name="Environ. Microbiol.">
        <title>The genome sequence of Desulfatibacillum alkenivorans AK-01: a blueprint for anaerobic alkane oxidation.</title>
        <authorList>
            <person name="Callaghan A.V."/>
            <person name="Morris B.E."/>
            <person name="Pereira I.A."/>
            <person name="McInerney M.J."/>
            <person name="Austin R.N."/>
            <person name="Groves J.T."/>
            <person name="Kukor J.J."/>
            <person name="Suflita J.M."/>
            <person name="Young L.Y."/>
            <person name="Zylstra G.J."/>
            <person name="Wawrik B."/>
        </authorList>
    </citation>
    <scope>NUCLEOTIDE SEQUENCE [LARGE SCALE GENOMIC DNA]</scope>
    <source>
        <strain>AK-01</strain>
    </source>
</reference>
<sequence length="214" mass="22968">MKFFIDTANIDEIKEANSMGMVDGVTTNPSLIAKEGRPFEDIIKDICAEVDGPISAEVISTEAKSMIEEGKKLAAIHKNIVIKIPMIPDGMIATRALSSEGIPVNVTLVFSPLQALVAAKAGAAFVSPFVGRLDDLANEGMLLIEQMVTIYNNYAFDTEVLVASVRNPLHVLEAAMMGADVATIPFGVIKKMMGHPLTDKGLAAFLADYEKSKK</sequence>
<comment type="function">
    <text evidence="1">Transaldolase is important for the balance of metabolites in the pentose-phosphate pathway.</text>
</comment>
<comment type="catalytic activity">
    <reaction evidence="1">
        <text>D-sedoheptulose 7-phosphate + D-glyceraldehyde 3-phosphate = D-erythrose 4-phosphate + beta-D-fructose 6-phosphate</text>
        <dbReference type="Rhea" id="RHEA:17053"/>
        <dbReference type="ChEBI" id="CHEBI:16897"/>
        <dbReference type="ChEBI" id="CHEBI:57483"/>
        <dbReference type="ChEBI" id="CHEBI:57634"/>
        <dbReference type="ChEBI" id="CHEBI:59776"/>
        <dbReference type="EC" id="2.2.1.2"/>
    </reaction>
</comment>
<comment type="pathway">
    <text evidence="1">Carbohydrate degradation; pentose phosphate pathway; D-glyceraldehyde 3-phosphate and beta-D-fructose 6-phosphate from D-ribose 5-phosphate and D-xylulose 5-phosphate (non-oxidative stage): step 2/3.</text>
</comment>
<comment type="subcellular location">
    <subcellularLocation>
        <location evidence="1">Cytoplasm</location>
    </subcellularLocation>
</comment>
<comment type="similarity">
    <text evidence="1">Belongs to the transaldolase family. Type 3B subfamily.</text>
</comment>
<keyword id="KW-0963">Cytoplasm</keyword>
<keyword id="KW-0570">Pentose shunt</keyword>
<keyword id="KW-1185">Reference proteome</keyword>
<keyword id="KW-0704">Schiff base</keyword>
<keyword id="KW-0808">Transferase</keyword>
<proteinExistence type="inferred from homology"/>
<dbReference type="EC" id="2.2.1.2" evidence="1"/>
<dbReference type="EMBL" id="CP001322">
    <property type="protein sequence ID" value="ACL02126.1"/>
    <property type="molecule type" value="Genomic_DNA"/>
</dbReference>
<dbReference type="SMR" id="B8FH38"/>
<dbReference type="KEGG" id="dal:Dalk_0417"/>
<dbReference type="eggNOG" id="COG0176">
    <property type="taxonomic scope" value="Bacteria"/>
</dbReference>
<dbReference type="HOGENOM" id="CLU_079764_0_0_7"/>
<dbReference type="UniPathway" id="UPA00115">
    <property type="reaction ID" value="UER00414"/>
</dbReference>
<dbReference type="Proteomes" id="UP000000739">
    <property type="component" value="Chromosome"/>
</dbReference>
<dbReference type="GO" id="GO:0005737">
    <property type="term" value="C:cytoplasm"/>
    <property type="evidence" value="ECO:0007669"/>
    <property type="project" value="UniProtKB-SubCell"/>
</dbReference>
<dbReference type="GO" id="GO:0016832">
    <property type="term" value="F:aldehyde-lyase activity"/>
    <property type="evidence" value="ECO:0007669"/>
    <property type="project" value="InterPro"/>
</dbReference>
<dbReference type="GO" id="GO:0004801">
    <property type="term" value="F:transaldolase activity"/>
    <property type="evidence" value="ECO:0007669"/>
    <property type="project" value="UniProtKB-UniRule"/>
</dbReference>
<dbReference type="GO" id="GO:0005975">
    <property type="term" value="P:carbohydrate metabolic process"/>
    <property type="evidence" value="ECO:0007669"/>
    <property type="project" value="InterPro"/>
</dbReference>
<dbReference type="GO" id="GO:0006098">
    <property type="term" value="P:pentose-phosphate shunt"/>
    <property type="evidence" value="ECO:0007669"/>
    <property type="project" value="UniProtKB-UniRule"/>
</dbReference>
<dbReference type="CDD" id="cd00956">
    <property type="entry name" value="Transaldolase_FSA"/>
    <property type="match status" value="1"/>
</dbReference>
<dbReference type="FunFam" id="3.20.20.70:FF:000018">
    <property type="entry name" value="Probable transaldolase"/>
    <property type="match status" value="1"/>
</dbReference>
<dbReference type="Gene3D" id="3.20.20.70">
    <property type="entry name" value="Aldolase class I"/>
    <property type="match status" value="1"/>
</dbReference>
<dbReference type="HAMAP" id="MF_00494">
    <property type="entry name" value="Transaldolase_3b"/>
    <property type="match status" value="1"/>
</dbReference>
<dbReference type="InterPro" id="IPR013785">
    <property type="entry name" value="Aldolase_TIM"/>
</dbReference>
<dbReference type="InterPro" id="IPR001585">
    <property type="entry name" value="TAL/FSA"/>
</dbReference>
<dbReference type="InterPro" id="IPR022999">
    <property type="entry name" value="Transaldolase_3B"/>
</dbReference>
<dbReference type="InterPro" id="IPR004731">
    <property type="entry name" value="Transaldolase_3B/F6P_aldolase"/>
</dbReference>
<dbReference type="InterPro" id="IPR018225">
    <property type="entry name" value="Transaldolase_AS"/>
</dbReference>
<dbReference type="InterPro" id="IPR033919">
    <property type="entry name" value="TSA/FSA_arc/bac"/>
</dbReference>
<dbReference type="NCBIfam" id="TIGR00875">
    <property type="entry name" value="fsa_talC_mipB"/>
    <property type="match status" value="1"/>
</dbReference>
<dbReference type="PANTHER" id="PTHR10683:SF40">
    <property type="entry name" value="FRUCTOSE-6-PHOSPHATE ALDOLASE 1-RELATED"/>
    <property type="match status" value="1"/>
</dbReference>
<dbReference type="PANTHER" id="PTHR10683">
    <property type="entry name" value="TRANSALDOLASE"/>
    <property type="match status" value="1"/>
</dbReference>
<dbReference type="Pfam" id="PF00923">
    <property type="entry name" value="TAL_FSA"/>
    <property type="match status" value="1"/>
</dbReference>
<dbReference type="SUPFAM" id="SSF51569">
    <property type="entry name" value="Aldolase"/>
    <property type="match status" value="1"/>
</dbReference>
<dbReference type="PROSITE" id="PS01054">
    <property type="entry name" value="TRANSALDOLASE_1"/>
    <property type="match status" value="1"/>
</dbReference>
<evidence type="ECO:0000255" key="1">
    <source>
        <dbReference type="HAMAP-Rule" id="MF_00494"/>
    </source>
</evidence>